<name>NEP_I61A1</name>
<organism>
    <name type="scientific">Influenza A virus (strain A/Swine/Wisconsin/1/1961 H1N1)</name>
    <dbReference type="NCBI Taxonomy" id="383533"/>
    <lineage>
        <taxon>Viruses</taxon>
        <taxon>Riboviria</taxon>
        <taxon>Orthornavirae</taxon>
        <taxon>Negarnaviricota</taxon>
        <taxon>Polyploviricotina</taxon>
        <taxon>Insthoviricetes</taxon>
        <taxon>Articulavirales</taxon>
        <taxon>Orthomyxoviridae</taxon>
        <taxon>Alphainfluenzavirus</taxon>
        <taxon>Alphainfluenzavirus influenzae</taxon>
        <taxon>Influenza A virus</taxon>
    </lineage>
</organism>
<proteinExistence type="inferred from homology"/>
<keyword id="KW-0025">Alternative splicing</keyword>
<keyword id="KW-1048">Host nucleus</keyword>
<keyword id="KW-0945">Host-virus interaction</keyword>
<keyword id="KW-0813">Transport</keyword>
<keyword id="KW-0946">Virion</keyword>
<accession>B3EUR1</accession>
<gene>
    <name evidence="1" type="primary">NS</name>
</gene>
<protein>
    <recommendedName>
        <fullName evidence="1">Nuclear export protein</fullName>
        <shortName evidence="1">NEP</shortName>
    </recommendedName>
    <alternativeName>
        <fullName evidence="1">Non-structural protein 2</fullName>
        <shortName evidence="1">NS2</shortName>
    </alternativeName>
</protein>
<evidence type="ECO:0000255" key="1">
    <source>
        <dbReference type="HAMAP-Rule" id="MF_04067"/>
    </source>
</evidence>
<comment type="function">
    <text evidence="1">Mediates the nuclear export of encapsidated genomic RNAs (ribonucleoproteins, RNPs). Acts as an adapter between viral RNPs complexes and the nuclear export machinery of the cell. Possesses no intrinsic RNA-binding activity, but includes a C-terminal M1-binding domain. This domain is believed to allow recognition of RNPs bound to the protein M1. Since protein M1 is not available in large quantities before late stages of infection, such an indirect recognition mechanism probably ensures that genomic RNPs are not exported from the host nucleus until sufficient quantities of viral mRNA and progeny genomic RNA have been synthesized. Furthermore, the RNPs enter the host cytoplasm only when associated with the M1 protein that is necessary to guide them to the plasma membrane. May down-regulate viral RNA synthesis when overproduced.</text>
</comment>
<comment type="subunit">
    <text evidence="1">Interacts with protein M1. May interact with host nucleoporin RAB/HRB and exportin XPO1/CRM1.</text>
</comment>
<comment type="subcellular location">
    <subcellularLocation>
        <location evidence="1">Virion</location>
    </subcellularLocation>
    <subcellularLocation>
        <location evidence="1">Host nucleus</location>
    </subcellularLocation>
</comment>
<comment type="alternative products">
    <event type="alternative splicing"/>
    <isoform>
        <id>B3EUR1-1</id>
        <name>NEP</name>
        <name>NS2</name>
        <sequence type="displayed"/>
    </isoform>
    <isoform>
        <id>O92564-1</id>
        <name>NS1</name>
        <sequence type="external"/>
    </isoform>
</comment>
<comment type="miscellaneous">
    <text>Average number present in a viral particle is estimated to be 130-200 molecules.</text>
</comment>
<comment type="similarity">
    <text evidence="1">Belongs to the influenza viruses NEP family.</text>
</comment>
<feature type="chain" id="PRO_0000372955" description="Nuclear export protein">
    <location>
        <begin position="1"/>
        <end position="121"/>
    </location>
</feature>
<feature type="short sequence motif" description="Nuclear export signal" evidence="1">
    <location>
        <begin position="12"/>
        <end position="21"/>
    </location>
</feature>
<feature type="short sequence motif" description="Nuclear export signal" evidence="1">
    <location>
        <begin position="85"/>
        <end position="94"/>
    </location>
</feature>
<dbReference type="EMBL" id="CY032217">
    <property type="protein sequence ID" value="ACD85160.1"/>
    <property type="molecule type" value="Viral_cRNA"/>
</dbReference>
<dbReference type="SMR" id="B3EUR1"/>
<dbReference type="Proteomes" id="UP000007769">
    <property type="component" value="Genome"/>
</dbReference>
<dbReference type="GO" id="GO:0042025">
    <property type="term" value="C:host cell nucleus"/>
    <property type="evidence" value="ECO:0007669"/>
    <property type="project" value="UniProtKB-SubCell"/>
</dbReference>
<dbReference type="GO" id="GO:0044423">
    <property type="term" value="C:virion component"/>
    <property type="evidence" value="ECO:0007669"/>
    <property type="project" value="UniProtKB-UniRule"/>
</dbReference>
<dbReference type="GO" id="GO:0039675">
    <property type="term" value="P:exit of virus from host cell nucleus through nuclear pore"/>
    <property type="evidence" value="ECO:0007669"/>
    <property type="project" value="UniProtKB-UniRule"/>
</dbReference>
<dbReference type="Gene3D" id="1.10.287.230">
    <property type="match status" value="1"/>
</dbReference>
<dbReference type="HAMAP" id="MF_04067">
    <property type="entry name" value="INFV_NEP"/>
    <property type="match status" value="1"/>
</dbReference>
<dbReference type="InterPro" id="IPR000968">
    <property type="entry name" value="Flu_NS2"/>
</dbReference>
<dbReference type="Pfam" id="PF00601">
    <property type="entry name" value="Flu_NS2"/>
    <property type="match status" value="1"/>
</dbReference>
<dbReference type="SUPFAM" id="SSF101156">
    <property type="entry name" value="Nonstructural protein ns2, Nep, M1-binding domain"/>
    <property type="match status" value="1"/>
</dbReference>
<sequence length="121" mass="14489">MDFNTVSSFQDILMRMSKMQLRSSSEGLNGMVTQFESLKIYRDSLGEAVMRMGDLHYLQNRNGKWREQLGQKFEEIRWLIEEVRHKLKITENSFEQITFMQALQLLLEVEQEMRTFSFQLI</sequence>
<organismHost>
    <name type="scientific">Aves</name>
    <dbReference type="NCBI Taxonomy" id="8782"/>
</organismHost>
<organismHost>
    <name type="scientific">Homo sapiens</name>
    <name type="common">Human</name>
    <dbReference type="NCBI Taxonomy" id="9606"/>
</organismHost>
<organismHost>
    <name type="scientific">Sus scrofa</name>
    <name type="common">Pig</name>
    <dbReference type="NCBI Taxonomy" id="9823"/>
</organismHost>
<reference key="1">
    <citation type="submission" date="2008-06" db="EMBL/GenBank/DDBJ databases">
        <title>The NIAID influenza genome sequencing project.</title>
        <authorList>
            <person name="Spiro D."/>
            <person name="Halpin R."/>
            <person name="Boyne A."/>
            <person name="Bera J."/>
            <person name="Ghedin E."/>
            <person name="Hostetler J."/>
            <person name="Fedorova N."/>
            <person name="Kim M."/>
            <person name="Zaborsky J."/>
            <person name="Overton L."/>
            <person name="Djuric K."/>
            <person name="Sarmiento M."/>
            <person name="Sitz J."/>
            <person name="Katzel D."/>
            <person name="Webster R.G."/>
            <person name="Hoffmann E."/>
            <person name="Krauss S."/>
            <person name="Naeve C."/>
            <person name="Bolotov P."/>
            <person name="Bao Y."/>
            <person name="Sanders R."/>
            <person name="Dernovoy D."/>
            <person name="Kiryutin B."/>
            <person name="Lipman D.J."/>
            <person name="Tatusova T."/>
        </authorList>
    </citation>
    <scope>NUCLEOTIDE SEQUENCE [GENOMIC RNA]</scope>
</reference>
<reference key="2">
    <citation type="submission" date="2008-06" db="EMBL/GenBank/DDBJ databases">
        <authorList>
            <consortium name="The NIAID Influenza Genome Sequencing Consortium"/>
        </authorList>
    </citation>
    <scope>NUCLEOTIDE SEQUENCE [GENOMIC RNA]</scope>
</reference>